<keyword id="KW-0965">Cell junction</keyword>
<keyword id="KW-0175">Coiled coil</keyword>
<keyword id="KW-0963">Cytoplasm</keyword>
<keyword id="KW-0968">Cytoplasmic vesicle</keyword>
<keyword id="KW-0343">GTPase activation</keyword>
<keyword id="KW-0597">Phosphoprotein</keyword>
<keyword id="KW-1185">Reference proteome</keyword>
<proteinExistence type="evidence at transcript level"/>
<dbReference type="EMBL" id="BC168982">
    <property type="protein sequence ID" value="AAI68982.1"/>
    <property type="molecule type" value="mRNA"/>
</dbReference>
<dbReference type="RefSeq" id="NP_001386092.1">
    <property type="nucleotide sequence ID" value="NM_001399163.1"/>
</dbReference>
<dbReference type="RefSeq" id="XP_006238118.1">
    <property type="nucleotide sequence ID" value="XM_006238056.3"/>
</dbReference>
<dbReference type="SMR" id="B5DFA1"/>
<dbReference type="FunCoup" id="B5DFA1">
    <property type="interactions" value="171"/>
</dbReference>
<dbReference type="STRING" id="10116.ENSRNOP00000011714"/>
<dbReference type="GlyGen" id="B5DFA1">
    <property type="glycosylation" value="1 site"/>
</dbReference>
<dbReference type="iPTMnet" id="B5DFA1"/>
<dbReference type="PhosphoSitePlus" id="B5DFA1"/>
<dbReference type="PaxDb" id="10116-ENSRNOP00000011714"/>
<dbReference type="PeptideAtlas" id="B5DFA1"/>
<dbReference type="Ensembl" id="ENSRNOT00000011714.9">
    <property type="protein sequence ID" value="ENSRNOP00000011714.6"/>
    <property type="gene ID" value="ENSRNOG00000023348.8"/>
</dbReference>
<dbReference type="GeneID" id="313234"/>
<dbReference type="UCSC" id="RGD:1306860">
    <property type="organism name" value="rat"/>
</dbReference>
<dbReference type="AGR" id="RGD:1306860"/>
<dbReference type="RGD" id="1306860">
    <property type="gene designation" value="Tbc1d2"/>
</dbReference>
<dbReference type="eggNOG" id="KOG2058">
    <property type="taxonomic scope" value="Eukaryota"/>
</dbReference>
<dbReference type="GeneTree" id="ENSGT00940000159937"/>
<dbReference type="HOGENOM" id="CLU_011278_0_0_1"/>
<dbReference type="InParanoid" id="B5DFA1"/>
<dbReference type="OMA" id="RWEFCNT"/>
<dbReference type="PhylomeDB" id="B5DFA1"/>
<dbReference type="Reactome" id="R-RNO-8854214">
    <property type="pathway name" value="TBC/RABGAPs"/>
</dbReference>
<dbReference type="PRO" id="PR:B5DFA1"/>
<dbReference type="Proteomes" id="UP000002494">
    <property type="component" value="Chromosome 5"/>
</dbReference>
<dbReference type="Bgee" id="ENSRNOG00000023348">
    <property type="expression patterns" value="Expressed in liver and 18 other cell types or tissues"/>
</dbReference>
<dbReference type="ExpressionAtlas" id="B5DFA1">
    <property type="expression patterns" value="baseline and differential"/>
</dbReference>
<dbReference type="GO" id="GO:0070161">
    <property type="term" value="C:anchoring junction"/>
    <property type="evidence" value="ECO:0007669"/>
    <property type="project" value="UniProtKB-SubCell"/>
</dbReference>
<dbReference type="GO" id="GO:0030054">
    <property type="term" value="C:cell junction"/>
    <property type="evidence" value="ECO:0000250"/>
    <property type="project" value="UniProtKB"/>
</dbReference>
<dbReference type="GO" id="GO:0005737">
    <property type="term" value="C:cytoplasm"/>
    <property type="evidence" value="ECO:0000318"/>
    <property type="project" value="GO_Central"/>
</dbReference>
<dbReference type="GO" id="GO:0031410">
    <property type="term" value="C:cytoplasmic vesicle"/>
    <property type="evidence" value="ECO:0000250"/>
    <property type="project" value="UniProtKB"/>
</dbReference>
<dbReference type="GO" id="GO:0005829">
    <property type="term" value="C:cytosol"/>
    <property type="evidence" value="ECO:0007669"/>
    <property type="project" value="Ensembl"/>
</dbReference>
<dbReference type="GO" id="GO:0005654">
    <property type="term" value="C:nucleoplasm"/>
    <property type="evidence" value="ECO:0007669"/>
    <property type="project" value="Ensembl"/>
</dbReference>
<dbReference type="GO" id="GO:0005886">
    <property type="term" value="C:plasma membrane"/>
    <property type="evidence" value="ECO:0000318"/>
    <property type="project" value="GO_Central"/>
</dbReference>
<dbReference type="GO" id="GO:0045296">
    <property type="term" value="F:cadherin binding"/>
    <property type="evidence" value="ECO:0000266"/>
    <property type="project" value="RGD"/>
</dbReference>
<dbReference type="GO" id="GO:0005096">
    <property type="term" value="F:GTPase activator activity"/>
    <property type="evidence" value="ECO:0000250"/>
    <property type="project" value="UniProtKB"/>
</dbReference>
<dbReference type="GO" id="GO:0043547">
    <property type="term" value="P:positive regulation of GTPase activity"/>
    <property type="evidence" value="ECO:0000250"/>
    <property type="project" value="UniProtKB"/>
</dbReference>
<dbReference type="CDD" id="cd01265">
    <property type="entry name" value="PH_TBC1D2A"/>
    <property type="match status" value="1"/>
</dbReference>
<dbReference type="FunFam" id="1.10.8.270:FF:000014">
    <property type="entry name" value="Putative TBC1 domain family member 2B"/>
    <property type="match status" value="1"/>
</dbReference>
<dbReference type="FunFam" id="2.30.29.30:FF:000248">
    <property type="entry name" value="TBC1 domain family member 2A isoform X1"/>
    <property type="match status" value="1"/>
</dbReference>
<dbReference type="FunFam" id="1.10.472.80:FF:000018">
    <property type="entry name" value="TBC1 domain family member 2B"/>
    <property type="match status" value="1"/>
</dbReference>
<dbReference type="Gene3D" id="2.30.29.30">
    <property type="entry name" value="Pleckstrin-homology domain (PH domain)/Phosphotyrosine-binding domain (PTB)"/>
    <property type="match status" value="1"/>
</dbReference>
<dbReference type="Gene3D" id="1.10.8.270">
    <property type="entry name" value="putative rabgap domain of human tbc1 domain family member 14 like domains"/>
    <property type="match status" value="1"/>
</dbReference>
<dbReference type="Gene3D" id="1.10.472.80">
    <property type="entry name" value="Ypt/Rab-GAP domain of gyp1p, domain 3"/>
    <property type="match status" value="1"/>
</dbReference>
<dbReference type="InterPro" id="IPR011993">
    <property type="entry name" value="PH-like_dom_sf"/>
</dbReference>
<dbReference type="InterPro" id="IPR001849">
    <property type="entry name" value="PH_domain"/>
</dbReference>
<dbReference type="InterPro" id="IPR000195">
    <property type="entry name" value="Rab-GAP-TBC_dom"/>
</dbReference>
<dbReference type="InterPro" id="IPR035969">
    <property type="entry name" value="Rab-GAP_TBC_sf"/>
</dbReference>
<dbReference type="InterPro" id="IPR050302">
    <property type="entry name" value="Rab_GAP_TBC_domain"/>
</dbReference>
<dbReference type="PANTHER" id="PTHR47219">
    <property type="entry name" value="RAB GTPASE-ACTIVATING PROTEIN 1-LIKE"/>
    <property type="match status" value="1"/>
</dbReference>
<dbReference type="PANTHER" id="PTHR47219:SF20">
    <property type="entry name" value="TBC1 DOMAIN FAMILY MEMBER 2B"/>
    <property type="match status" value="1"/>
</dbReference>
<dbReference type="Pfam" id="PF00169">
    <property type="entry name" value="PH"/>
    <property type="match status" value="1"/>
</dbReference>
<dbReference type="Pfam" id="PF00566">
    <property type="entry name" value="RabGAP-TBC"/>
    <property type="match status" value="1"/>
</dbReference>
<dbReference type="SMART" id="SM00233">
    <property type="entry name" value="PH"/>
    <property type="match status" value="1"/>
</dbReference>
<dbReference type="SMART" id="SM00164">
    <property type="entry name" value="TBC"/>
    <property type="match status" value="1"/>
</dbReference>
<dbReference type="SUPFAM" id="SSF50729">
    <property type="entry name" value="PH domain-like"/>
    <property type="match status" value="1"/>
</dbReference>
<dbReference type="SUPFAM" id="SSF47923">
    <property type="entry name" value="Ypt/Rab-GAP domain of gyp1p"/>
    <property type="match status" value="2"/>
</dbReference>
<dbReference type="PROSITE" id="PS50003">
    <property type="entry name" value="PH_DOMAIN"/>
    <property type="match status" value="1"/>
</dbReference>
<dbReference type="PROSITE" id="PS50086">
    <property type="entry name" value="TBC_RABGAP"/>
    <property type="match status" value="1"/>
</dbReference>
<organism>
    <name type="scientific">Rattus norvegicus</name>
    <name type="common">Rat</name>
    <dbReference type="NCBI Taxonomy" id="10116"/>
    <lineage>
        <taxon>Eukaryota</taxon>
        <taxon>Metazoa</taxon>
        <taxon>Chordata</taxon>
        <taxon>Craniata</taxon>
        <taxon>Vertebrata</taxon>
        <taxon>Euteleostomi</taxon>
        <taxon>Mammalia</taxon>
        <taxon>Eutheria</taxon>
        <taxon>Euarchontoglires</taxon>
        <taxon>Glires</taxon>
        <taxon>Rodentia</taxon>
        <taxon>Myomorpha</taxon>
        <taxon>Muroidea</taxon>
        <taxon>Muridae</taxon>
        <taxon>Murinae</taxon>
        <taxon>Rattus</taxon>
    </lineage>
</organism>
<reference key="1">
    <citation type="journal article" date="2004" name="Genome Res.">
        <title>The status, quality, and expansion of the NIH full-length cDNA project: the Mammalian Gene Collection (MGC).</title>
        <authorList>
            <consortium name="The MGC Project Team"/>
        </authorList>
    </citation>
    <scope>NUCLEOTIDE SEQUENCE [LARGE SCALE MRNA]</scope>
    <source>
        <tissue>Lung</tissue>
    </source>
</reference>
<feature type="chain" id="PRO_0000395195" description="TBC1 domain family member 2A">
    <location>
        <begin position="1"/>
        <end position="924"/>
    </location>
</feature>
<feature type="domain" description="PH" evidence="4">
    <location>
        <begin position="42"/>
        <end position="140"/>
    </location>
</feature>
<feature type="domain" description="Rab-GAP TBC" evidence="5">
    <location>
        <begin position="621"/>
        <end position="813"/>
    </location>
</feature>
<feature type="region of interest" description="Interaction with CADH1" evidence="1">
    <location>
        <begin position="1"/>
        <end position="167"/>
    </location>
</feature>
<feature type="region of interest" description="Disordered" evidence="6">
    <location>
        <begin position="1"/>
        <end position="38"/>
    </location>
</feature>
<feature type="region of interest" description="Disordered" evidence="6">
    <location>
        <begin position="228"/>
        <end position="296"/>
    </location>
</feature>
<feature type="region of interest" description="Interaction with RAC1" evidence="1">
    <location>
        <begin position="297"/>
        <end position="435"/>
    </location>
</feature>
<feature type="coiled-coil region" evidence="3">
    <location>
        <begin position="303"/>
        <end position="332"/>
    </location>
</feature>
<feature type="coiled-coil region" evidence="3">
    <location>
        <begin position="361"/>
        <end position="418"/>
    </location>
</feature>
<feature type="coiled-coil region" evidence="3">
    <location>
        <begin position="444"/>
        <end position="477"/>
    </location>
</feature>
<feature type="coiled-coil region" evidence="3">
    <location>
        <begin position="871"/>
        <end position="906"/>
    </location>
</feature>
<feature type="compositionally biased region" description="Basic and acidic residues" evidence="6">
    <location>
        <begin position="261"/>
        <end position="270"/>
    </location>
</feature>
<feature type="modified residue" description="Phosphoserine" evidence="2">
    <location>
        <position position="916"/>
    </location>
</feature>
<accession>B5DFA1</accession>
<sequence length="924" mass="104975">MEDTPERTPSSESIQPPGLAREPEVTSPGDSEGCARPLDPAPKKLCGYLSKFGGKGPIKGWKCRWFFYDERKCHLYYSRTAQDANPLDSIDLSSATFDCKADAEEEGTFEIKTPSRVITLKAATRQVMLYWLQQLQMKRWEFHNSPPALPATPAAALTENGPTLHLKLEQEEAELEEFLCPVKTPPGLVGTAAALQPVPAMPSALQNISLKHLGTEIQNTMYNIRGNKQAQATAHGPPVEESSQSAEPQRGEQPLISDPSIPEKEPEDPPKSAPRSCVPSGPMQKPKRQSNTFPFFSDGLARSRTAQEKVVALEQQVLMLTKELKSQKELVIILHKALEAAQQEKRASSAYLAATEDRDRLELVRHKVRQIAELNQRVEALEQDRERLVHEAGLREQQVQALQQHVQLLMDKNQAKQQVICKLSQKLTEDLAQPQPADATNGDFLSQQERLEHLKDDMEAYRTQNRFLNSEIHQVTKIWRKVAEKEKALLTKCAYLQARNCQVESKYLAGLRRLQEAAGAEPGDFPELLQQLVQEALQWEAGEASDSVGLSPVSEYDDYGFLTVPDYEVEDLKLLAKIQALEVRSHHLLALEAVERPLRDRWATLTELMPSAELKQLLRAGVPREHRPRVWRWLVHRRVQHLHSSGCYQELLARGRACEHPAARQIELDLNRTFPTNKHFTCPTSSFPDKLRRVLLAFSWQNPTIGYCQGLNRLAAIALLVLEDEESAFWCLVAIVETILPAEYYSKTLTASQVDQRVLQDLLSEKLPRLTAHLGQRHVDLSLITFNWFLVIFADSLISDILLRVWDAFLYEGTKVVFRYALAIFKYNEEAILRLQDSLEIYQYLRFFTKTICDSRKLTSIAFNDMNPFPMKQLRQLRAAHRERLEAELRELELLKAEYLERRASRGRAVPEGCVSEDEGEGDS</sequence>
<comment type="function">
    <text evidence="1">Acts as a GTPase-activating protein for RAB7A. Signal effector acting as a linker between RAC1 and RAB7A, leading to RAB7A inactivation and subsequent inhibition of cadherin degradation and reduced cell-cell adhesion (By similarity).</text>
</comment>
<comment type="subunit">
    <text>Interacts with activated RAC1 and CDH1.</text>
</comment>
<comment type="subcellular location">
    <subcellularLocation>
        <location evidence="1">Cytoplasm</location>
    </subcellularLocation>
    <subcellularLocation>
        <location evidence="1">Cytoplasmic vesicle</location>
    </subcellularLocation>
    <subcellularLocation>
        <location evidence="1">Cell junction</location>
    </subcellularLocation>
</comment>
<protein>
    <recommendedName>
        <fullName>TBC1 domain family member 2A</fullName>
    </recommendedName>
</protein>
<evidence type="ECO:0000250" key="1"/>
<evidence type="ECO:0000250" key="2">
    <source>
        <dbReference type="UniProtKB" id="Q9BYX2"/>
    </source>
</evidence>
<evidence type="ECO:0000255" key="3"/>
<evidence type="ECO:0000255" key="4">
    <source>
        <dbReference type="PROSITE-ProRule" id="PRU00145"/>
    </source>
</evidence>
<evidence type="ECO:0000255" key="5">
    <source>
        <dbReference type="PROSITE-ProRule" id="PRU00163"/>
    </source>
</evidence>
<evidence type="ECO:0000256" key="6">
    <source>
        <dbReference type="SAM" id="MobiDB-lite"/>
    </source>
</evidence>
<gene>
    <name type="primary">Tbc1d2</name>
    <name type="synonym">Tbc1d2a</name>
</gene>
<name>TBD2A_RAT</name>